<evidence type="ECO:0000255" key="1">
    <source>
        <dbReference type="HAMAP-Rule" id="MF_01590"/>
    </source>
</evidence>
<comment type="function">
    <text evidence="1">Catalyzes carboxymethyl transfer from carboxy-S-adenosyl-L-methionine (Cx-SAM) to 5-hydroxyuridine (ho5U) to form 5-carboxymethoxyuridine (cmo5U) at position 34 in tRNAs.</text>
</comment>
<comment type="catalytic activity">
    <reaction evidence="1">
        <text>carboxy-S-adenosyl-L-methionine + 5-hydroxyuridine(34) in tRNA = 5-carboxymethoxyuridine(34) in tRNA + S-adenosyl-L-homocysteine + H(+)</text>
        <dbReference type="Rhea" id="RHEA:52848"/>
        <dbReference type="Rhea" id="RHEA-COMP:13381"/>
        <dbReference type="Rhea" id="RHEA-COMP:13383"/>
        <dbReference type="ChEBI" id="CHEBI:15378"/>
        <dbReference type="ChEBI" id="CHEBI:57856"/>
        <dbReference type="ChEBI" id="CHEBI:134278"/>
        <dbReference type="ChEBI" id="CHEBI:136877"/>
        <dbReference type="ChEBI" id="CHEBI:136879"/>
    </reaction>
</comment>
<comment type="subunit">
    <text evidence="1">Homotetramer.</text>
</comment>
<comment type="similarity">
    <text evidence="1">Belongs to the class I-like SAM-binding methyltransferase superfamily. CmoB family.</text>
</comment>
<dbReference type="EC" id="2.5.1.-" evidence="1"/>
<dbReference type="EMBL" id="CP000948">
    <property type="protein sequence ID" value="ACB03069.1"/>
    <property type="molecule type" value="Genomic_DNA"/>
</dbReference>
<dbReference type="RefSeq" id="WP_000564725.1">
    <property type="nucleotide sequence ID" value="NC_010473.1"/>
</dbReference>
<dbReference type="SMR" id="B1XHD9"/>
<dbReference type="GeneID" id="75171943"/>
<dbReference type="KEGG" id="ecd:ECDH10B_2012"/>
<dbReference type="HOGENOM" id="CLU_052665_0_0_6"/>
<dbReference type="GO" id="GO:0016765">
    <property type="term" value="F:transferase activity, transferring alkyl or aryl (other than methyl) groups"/>
    <property type="evidence" value="ECO:0007669"/>
    <property type="project" value="UniProtKB-UniRule"/>
</dbReference>
<dbReference type="GO" id="GO:0002098">
    <property type="term" value="P:tRNA wobble uridine modification"/>
    <property type="evidence" value="ECO:0007669"/>
    <property type="project" value="InterPro"/>
</dbReference>
<dbReference type="CDD" id="cd02440">
    <property type="entry name" value="AdoMet_MTases"/>
    <property type="match status" value="1"/>
</dbReference>
<dbReference type="FunFam" id="3.40.50.150:FF:000080">
    <property type="entry name" value="tRNA U34 carboxymethyltransferase"/>
    <property type="match status" value="1"/>
</dbReference>
<dbReference type="Gene3D" id="3.40.50.150">
    <property type="entry name" value="Vaccinia Virus protein VP39"/>
    <property type="match status" value="1"/>
</dbReference>
<dbReference type="HAMAP" id="MF_01590">
    <property type="entry name" value="tRNA_carboxymethyltr_CmoB"/>
    <property type="match status" value="1"/>
</dbReference>
<dbReference type="InterPro" id="IPR010017">
    <property type="entry name" value="CmoB"/>
</dbReference>
<dbReference type="InterPro" id="IPR027555">
    <property type="entry name" value="Mo5U34_MeTrfas-like"/>
</dbReference>
<dbReference type="InterPro" id="IPR029063">
    <property type="entry name" value="SAM-dependent_MTases_sf"/>
</dbReference>
<dbReference type="NCBIfam" id="NF011650">
    <property type="entry name" value="PRK15068.1"/>
    <property type="match status" value="1"/>
</dbReference>
<dbReference type="NCBIfam" id="TIGR00452">
    <property type="entry name" value="tRNA 5-methoxyuridine(34)/uridine 5-oxyacetic acid(34) synthase CmoB"/>
    <property type="match status" value="1"/>
</dbReference>
<dbReference type="PANTHER" id="PTHR43861">
    <property type="entry name" value="TRANS-ACONITATE 2-METHYLTRANSFERASE-RELATED"/>
    <property type="match status" value="1"/>
</dbReference>
<dbReference type="Pfam" id="PF08003">
    <property type="entry name" value="Methyltransf_9"/>
    <property type="match status" value="1"/>
</dbReference>
<dbReference type="SUPFAM" id="SSF53335">
    <property type="entry name" value="S-adenosyl-L-methionine-dependent methyltransferases"/>
    <property type="match status" value="1"/>
</dbReference>
<proteinExistence type="inferred from homology"/>
<reference key="1">
    <citation type="journal article" date="2008" name="J. Bacteriol.">
        <title>The complete genome sequence of Escherichia coli DH10B: insights into the biology of a laboratory workhorse.</title>
        <authorList>
            <person name="Durfee T."/>
            <person name="Nelson R."/>
            <person name="Baldwin S."/>
            <person name="Plunkett G. III"/>
            <person name="Burland V."/>
            <person name="Mau B."/>
            <person name="Petrosino J.F."/>
            <person name="Qin X."/>
            <person name="Muzny D.M."/>
            <person name="Ayele M."/>
            <person name="Gibbs R.A."/>
            <person name="Csorgo B."/>
            <person name="Posfai G."/>
            <person name="Weinstock G.M."/>
            <person name="Blattner F.R."/>
        </authorList>
    </citation>
    <scope>NUCLEOTIDE SEQUENCE [LARGE SCALE GENOMIC DNA]</scope>
    <source>
        <strain>K12 / DH10B</strain>
    </source>
</reference>
<name>CMOB_ECODH</name>
<keyword id="KW-0808">Transferase</keyword>
<keyword id="KW-0819">tRNA processing</keyword>
<sequence>MIDFGNFYSLIAKNHLSHWLETLPAQIANWQREQQHGLFKQWSNAVEFLPEIKPYRLDLLHSVTAESEEPLSAGQIKRIETLMRNLMPWRKGPFSLYGVNIDTEWRSDWKWDRVLPHLSDLTGRTILDVGCGSGYHMWRMIGAGAHLAVGIDPTQLFLCQFEAVRKLLGNDQRAHLLPLGIEQLPALKAFDTVFSMGVLYHRRSPLEHLWQLKDQLVNEGELVLETLVIDGDENTVLVPGDRYAQMRNVYFIPSALALKNWLKKCGFVDIRIADVSVTTTEEQRRTEWMVTESLADFLDPHDPGKTVEGYPAPKRAVLIARKP</sequence>
<protein>
    <recommendedName>
        <fullName evidence="1">tRNA U34 carboxymethyltransferase</fullName>
        <ecNumber evidence="1">2.5.1.-</ecNumber>
    </recommendedName>
</protein>
<organism>
    <name type="scientific">Escherichia coli (strain K12 / DH10B)</name>
    <dbReference type="NCBI Taxonomy" id="316385"/>
    <lineage>
        <taxon>Bacteria</taxon>
        <taxon>Pseudomonadati</taxon>
        <taxon>Pseudomonadota</taxon>
        <taxon>Gammaproteobacteria</taxon>
        <taxon>Enterobacterales</taxon>
        <taxon>Enterobacteriaceae</taxon>
        <taxon>Escherichia</taxon>
    </lineage>
</organism>
<feature type="chain" id="PRO_1000201289" description="tRNA U34 carboxymethyltransferase">
    <location>
        <begin position="1"/>
        <end position="323"/>
    </location>
</feature>
<feature type="binding site" evidence="1">
    <location>
        <position position="91"/>
    </location>
    <ligand>
        <name>carboxy-S-adenosyl-L-methionine</name>
        <dbReference type="ChEBI" id="CHEBI:134278"/>
    </ligand>
</feature>
<feature type="binding site" evidence="1">
    <location>
        <position position="105"/>
    </location>
    <ligand>
        <name>carboxy-S-adenosyl-L-methionine</name>
        <dbReference type="ChEBI" id="CHEBI:134278"/>
    </ligand>
</feature>
<feature type="binding site" evidence="1">
    <location>
        <position position="110"/>
    </location>
    <ligand>
        <name>carboxy-S-adenosyl-L-methionine</name>
        <dbReference type="ChEBI" id="CHEBI:134278"/>
    </ligand>
</feature>
<feature type="binding site" evidence="1">
    <location>
        <position position="130"/>
    </location>
    <ligand>
        <name>carboxy-S-adenosyl-L-methionine</name>
        <dbReference type="ChEBI" id="CHEBI:134278"/>
    </ligand>
</feature>
<feature type="binding site" evidence="1">
    <location>
        <begin position="152"/>
        <end position="154"/>
    </location>
    <ligand>
        <name>carboxy-S-adenosyl-L-methionine</name>
        <dbReference type="ChEBI" id="CHEBI:134278"/>
    </ligand>
</feature>
<feature type="binding site" evidence="1">
    <location>
        <begin position="181"/>
        <end position="182"/>
    </location>
    <ligand>
        <name>carboxy-S-adenosyl-L-methionine</name>
        <dbReference type="ChEBI" id="CHEBI:134278"/>
    </ligand>
</feature>
<feature type="binding site" evidence="1">
    <location>
        <position position="196"/>
    </location>
    <ligand>
        <name>carboxy-S-adenosyl-L-methionine</name>
        <dbReference type="ChEBI" id="CHEBI:134278"/>
    </ligand>
</feature>
<feature type="binding site" evidence="1">
    <location>
        <position position="200"/>
    </location>
    <ligand>
        <name>carboxy-S-adenosyl-L-methionine</name>
        <dbReference type="ChEBI" id="CHEBI:134278"/>
    </ligand>
</feature>
<feature type="binding site" evidence="1">
    <location>
        <position position="315"/>
    </location>
    <ligand>
        <name>carboxy-S-adenosyl-L-methionine</name>
        <dbReference type="ChEBI" id="CHEBI:134278"/>
    </ligand>
</feature>
<accession>B1XHD9</accession>
<gene>
    <name evidence="1" type="primary">cmoB</name>
    <name type="ordered locus">ECDH10B_2012</name>
</gene>